<gene>
    <name evidence="1" type="primary">mnmE</name>
    <name evidence="1" type="synonym">trmE</name>
    <name type="ordered locus">BARBAKC583_0010</name>
</gene>
<protein>
    <recommendedName>
        <fullName evidence="1">tRNA modification GTPase MnmE</fullName>
        <ecNumber evidence="1">3.6.-.-</ecNumber>
    </recommendedName>
</protein>
<comment type="function">
    <text evidence="1">Exhibits a very high intrinsic GTPase hydrolysis rate. Involved in the addition of a carboxymethylaminomethyl (cmnm) group at the wobble position (U34) of certain tRNAs, forming tRNA-cmnm(5)s(2)U34.</text>
</comment>
<comment type="cofactor">
    <cofactor evidence="1">
        <name>K(+)</name>
        <dbReference type="ChEBI" id="CHEBI:29103"/>
    </cofactor>
    <text evidence="1">Binds 1 potassium ion per subunit.</text>
</comment>
<comment type="subunit">
    <text evidence="1">Homodimer. Heterotetramer of two MnmE and two MnmG subunits.</text>
</comment>
<comment type="subcellular location">
    <subcellularLocation>
        <location evidence="1">Cytoplasm</location>
    </subcellularLocation>
</comment>
<comment type="similarity">
    <text evidence="1">Belongs to the TRAFAC class TrmE-Era-EngA-EngB-Septin-like GTPase superfamily. TrmE GTPase family.</text>
</comment>
<sequence>MDTIFAVSSGLLPSGVAVIRVSGPRVVDIVKTLCGCLPKARFMHHGDLIARDGSFLDSALTVFFPRPHSFTGEDCAEFHLHGGKAVVNRFLDELSTFTGCRLAEAGEFSRRAFIEGKIDLVQAEGLADLIEAETESQRRLAVMGANGHLTELYRHWRNKLMTARALIEAELDFSDEADVSNFSSDKVWQNMQELSDSLCEHIAEGERANILRDGIKVVIVGVPNSGKSSIINRLAGRPVAIVTEEEGTTRDALEVRLILGGLPVLVMDTAGFRETESKIEQLGIDIAKQHVLDADLVILVDDMKNPQKISLPNTSAEIWRVGNKLDICEGDKTRWPIQFSALNGLNFDYFLKEIESFCLHRIAEIGNIFPARKRQIQLLKEAVKEIDSSINYTFLDLSLRAEHLRRASDALGRITGDIDVEDLLDIIFSQFCIGK</sequence>
<feature type="chain" id="PRO_0000345716" description="tRNA modification GTPase MnmE">
    <location>
        <begin position="1"/>
        <end position="435"/>
    </location>
</feature>
<feature type="domain" description="TrmE-type G">
    <location>
        <begin position="214"/>
        <end position="359"/>
    </location>
</feature>
<feature type="binding site" evidence="1">
    <location>
        <position position="20"/>
    </location>
    <ligand>
        <name>(6S)-5-formyl-5,6,7,8-tetrahydrofolate</name>
        <dbReference type="ChEBI" id="CHEBI:57457"/>
    </ligand>
</feature>
<feature type="binding site" evidence="1">
    <location>
        <position position="77"/>
    </location>
    <ligand>
        <name>(6S)-5-formyl-5,6,7,8-tetrahydrofolate</name>
        <dbReference type="ChEBI" id="CHEBI:57457"/>
    </ligand>
</feature>
<feature type="binding site" evidence="1">
    <location>
        <position position="117"/>
    </location>
    <ligand>
        <name>(6S)-5-formyl-5,6,7,8-tetrahydrofolate</name>
        <dbReference type="ChEBI" id="CHEBI:57457"/>
    </ligand>
</feature>
<feature type="binding site" evidence="1">
    <location>
        <begin position="224"/>
        <end position="229"/>
    </location>
    <ligand>
        <name>GTP</name>
        <dbReference type="ChEBI" id="CHEBI:37565"/>
    </ligand>
</feature>
<feature type="binding site" evidence="1">
    <location>
        <position position="228"/>
    </location>
    <ligand>
        <name>Mg(2+)</name>
        <dbReference type="ChEBI" id="CHEBI:18420"/>
    </ligand>
</feature>
<feature type="binding site" evidence="1">
    <location>
        <begin position="243"/>
        <end position="249"/>
    </location>
    <ligand>
        <name>GTP</name>
        <dbReference type="ChEBI" id="CHEBI:37565"/>
    </ligand>
</feature>
<feature type="binding site" evidence="1">
    <location>
        <position position="249"/>
    </location>
    <ligand>
        <name>Mg(2+)</name>
        <dbReference type="ChEBI" id="CHEBI:18420"/>
    </ligand>
</feature>
<feature type="binding site" evidence="1">
    <location>
        <begin position="268"/>
        <end position="271"/>
    </location>
    <ligand>
        <name>GTP</name>
        <dbReference type="ChEBI" id="CHEBI:37565"/>
    </ligand>
</feature>
<feature type="binding site" evidence="1">
    <location>
        <position position="435"/>
    </location>
    <ligand>
        <name>(6S)-5-formyl-5,6,7,8-tetrahydrofolate</name>
        <dbReference type="ChEBI" id="CHEBI:57457"/>
    </ligand>
</feature>
<organism>
    <name type="scientific">Bartonella bacilliformis (strain ATCC 35685 / KC583 / Herrer 020/F12,63)</name>
    <dbReference type="NCBI Taxonomy" id="360095"/>
    <lineage>
        <taxon>Bacteria</taxon>
        <taxon>Pseudomonadati</taxon>
        <taxon>Pseudomonadota</taxon>
        <taxon>Alphaproteobacteria</taxon>
        <taxon>Hyphomicrobiales</taxon>
        <taxon>Bartonellaceae</taxon>
        <taxon>Bartonella</taxon>
    </lineage>
</organism>
<dbReference type="EC" id="3.6.-.-" evidence="1"/>
<dbReference type="EMBL" id="CP000524">
    <property type="protein sequence ID" value="ABM45692.1"/>
    <property type="molecule type" value="Genomic_DNA"/>
</dbReference>
<dbReference type="RefSeq" id="WP_005765686.1">
    <property type="nucleotide sequence ID" value="NC_008783.1"/>
</dbReference>
<dbReference type="SMR" id="A1UQU6"/>
<dbReference type="STRING" id="360095.BARBAKC583_0010"/>
<dbReference type="GeneID" id="4684249"/>
<dbReference type="KEGG" id="bbk:BARBAKC583_0010"/>
<dbReference type="PATRIC" id="fig|360095.6.peg.10"/>
<dbReference type="eggNOG" id="COG0486">
    <property type="taxonomic scope" value="Bacteria"/>
</dbReference>
<dbReference type="HOGENOM" id="CLU_019624_3_1_5"/>
<dbReference type="OrthoDB" id="9805918at2"/>
<dbReference type="Proteomes" id="UP000000643">
    <property type="component" value="Chromosome"/>
</dbReference>
<dbReference type="GO" id="GO:0005737">
    <property type="term" value="C:cytoplasm"/>
    <property type="evidence" value="ECO:0007669"/>
    <property type="project" value="UniProtKB-SubCell"/>
</dbReference>
<dbReference type="GO" id="GO:0005525">
    <property type="term" value="F:GTP binding"/>
    <property type="evidence" value="ECO:0007669"/>
    <property type="project" value="UniProtKB-UniRule"/>
</dbReference>
<dbReference type="GO" id="GO:0003924">
    <property type="term" value="F:GTPase activity"/>
    <property type="evidence" value="ECO:0007669"/>
    <property type="project" value="UniProtKB-UniRule"/>
</dbReference>
<dbReference type="GO" id="GO:0046872">
    <property type="term" value="F:metal ion binding"/>
    <property type="evidence" value="ECO:0007669"/>
    <property type="project" value="UniProtKB-KW"/>
</dbReference>
<dbReference type="GO" id="GO:0030488">
    <property type="term" value="P:tRNA methylation"/>
    <property type="evidence" value="ECO:0007669"/>
    <property type="project" value="TreeGrafter"/>
</dbReference>
<dbReference type="GO" id="GO:0002098">
    <property type="term" value="P:tRNA wobble uridine modification"/>
    <property type="evidence" value="ECO:0007669"/>
    <property type="project" value="TreeGrafter"/>
</dbReference>
<dbReference type="CDD" id="cd04164">
    <property type="entry name" value="trmE"/>
    <property type="match status" value="1"/>
</dbReference>
<dbReference type="CDD" id="cd14858">
    <property type="entry name" value="TrmE_N"/>
    <property type="match status" value="1"/>
</dbReference>
<dbReference type="FunFam" id="3.30.1360.120:FF:000007">
    <property type="entry name" value="tRNA modification GTPase GTPBP3, mitochondrial"/>
    <property type="match status" value="1"/>
</dbReference>
<dbReference type="Gene3D" id="3.40.50.300">
    <property type="entry name" value="P-loop containing nucleotide triphosphate hydrolases"/>
    <property type="match status" value="1"/>
</dbReference>
<dbReference type="Gene3D" id="3.30.1360.120">
    <property type="entry name" value="Probable tRNA modification gtpase trme, domain 1"/>
    <property type="match status" value="1"/>
</dbReference>
<dbReference type="Gene3D" id="1.20.120.430">
    <property type="entry name" value="tRNA modification GTPase MnmE domain 2"/>
    <property type="match status" value="1"/>
</dbReference>
<dbReference type="HAMAP" id="MF_00379">
    <property type="entry name" value="GTPase_MnmE"/>
    <property type="match status" value="1"/>
</dbReference>
<dbReference type="InterPro" id="IPR031168">
    <property type="entry name" value="G_TrmE"/>
</dbReference>
<dbReference type="InterPro" id="IPR006073">
    <property type="entry name" value="GTP-bd"/>
</dbReference>
<dbReference type="InterPro" id="IPR018948">
    <property type="entry name" value="GTP-bd_TrmE_N"/>
</dbReference>
<dbReference type="InterPro" id="IPR004520">
    <property type="entry name" value="GTPase_MnmE"/>
</dbReference>
<dbReference type="InterPro" id="IPR027368">
    <property type="entry name" value="MnmE_dom2"/>
</dbReference>
<dbReference type="InterPro" id="IPR025867">
    <property type="entry name" value="MnmE_helical"/>
</dbReference>
<dbReference type="InterPro" id="IPR027417">
    <property type="entry name" value="P-loop_NTPase"/>
</dbReference>
<dbReference type="InterPro" id="IPR005225">
    <property type="entry name" value="Small_GTP-bd"/>
</dbReference>
<dbReference type="InterPro" id="IPR027266">
    <property type="entry name" value="TrmE/GcvT_dom1"/>
</dbReference>
<dbReference type="NCBIfam" id="TIGR00450">
    <property type="entry name" value="mnmE_trmE_thdF"/>
    <property type="match status" value="1"/>
</dbReference>
<dbReference type="NCBIfam" id="NF003661">
    <property type="entry name" value="PRK05291.1-3"/>
    <property type="match status" value="1"/>
</dbReference>
<dbReference type="NCBIfam" id="TIGR00231">
    <property type="entry name" value="small_GTP"/>
    <property type="match status" value="1"/>
</dbReference>
<dbReference type="PANTHER" id="PTHR42714">
    <property type="entry name" value="TRNA MODIFICATION GTPASE GTPBP3"/>
    <property type="match status" value="1"/>
</dbReference>
<dbReference type="PANTHER" id="PTHR42714:SF2">
    <property type="entry name" value="TRNA MODIFICATION GTPASE GTPBP3, MITOCHONDRIAL"/>
    <property type="match status" value="1"/>
</dbReference>
<dbReference type="Pfam" id="PF01926">
    <property type="entry name" value="MMR_HSR1"/>
    <property type="match status" value="1"/>
</dbReference>
<dbReference type="Pfam" id="PF12631">
    <property type="entry name" value="MnmE_helical"/>
    <property type="match status" value="1"/>
</dbReference>
<dbReference type="Pfam" id="PF10396">
    <property type="entry name" value="TrmE_N"/>
    <property type="match status" value="1"/>
</dbReference>
<dbReference type="SUPFAM" id="SSF52540">
    <property type="entry name" value="P-loop containing nucleoside triphosphate hydrolases"/>
    <property type="match status" value="1"/>
</dbReference>
<dbReference type="SUPFAM" id="SSF116878">
    <property type="entry name" value="TrmE connector domain"/>
    <property type="match status" value="1"/>
</dbReference>
<dbReference type="PROSITE" id="PS51709">
    <property type="entry name" value="G_TRME"/>
    <property type="match status" value="1"/>
</dbReference>
<accession>A1UQU6</accession>
<reference key="1">
    <citation type="submission" date="2006-12" db="EMBL/GenBank/DDBJ databases">
        <authorList>
            <person name="Hendrix L."/>
            <person name="Mohamoud Y."/>
            <person name="Radune D."/>
            <person name="Shvartsbeyn A."/>
            <person name="Daugherty S."/>
            <person name="Dodson R."/>
            <person name="Durkin A.S."/>
            <person name="Harkins D."/>
            <person name="Huot H."/>
            <person name="Kothari S.P."/>
            <person name="Madupu R."/>
            <person name="Li J."/>
            <person name="Nelson W.C."/>
            <person name="Shrivastava S."/>
            <person name="Giglio M.G."/>
            <person name="Haft D."/>
            <person name="Selengut J."/>
            <person name="Fraser-Ligget C."/>
            <person name="Seshadri R."/>
        </authorList>
    </citation>
    <scope>NUCLEOTIDE SEQUENCE [LARGE SCALE GENOMIC DNA]</scope>
    <source>
        <strain>ATCC 35685 / KC583 / Herrer 020/F12,63</strain>
    </source>
</reference>
<name>MNME_BARBK</name>
<keyword id="KW-0963">Cytoplasm</keyword>
<keyword id="KW-0342">GTP-binding</keyword>
<keyword id="KW-0378">Hydrolase</keyword>
<keyword id="KW-0460">Magnesium</keyword>
<keyword id="KW-0479">Metal-binding</keyword>
<keyword id="KW-0547">Nucleotide-binding</keyword>
<keyword id="KW-0630">Potassium</keyword>
<keyword id="KW-0819">tRNA processing</keyword>
<evidence type="ECO:0000255" key="1">
    <source>
        <dbReference type="HAMAP-Rule" id="MF_00379"/>
    </source>
</evidence>
<proteinExistence type="inferred from homology"/>